<proteinExistence type="inferred from homology"/>
<sequence length="208" mass="22512">MKLTQDLTSDGPDPPVLGKPLTRAFFGRSVHDVAPDLIGATLLVDGVGGIIVEVEAYHHTEPAAHSHRGPTPRNMVMFGPPGFAYVYRSYGIHWCVNFVCEMDGSAAAVLIRALQPTHGIPAMRRRRGLHEERLLCSGPGRLCQALGISIAHNALPLDAPPIAVFRRTEKADVVAGVRIGITKAADLPWRYGLKGSKFLSKPFRSAGY</sequence>
<keyword id="KW-0227">DNA damage</keyword>
<keyword id="KW-0234">DNA repair</keyword>
<keyword id="KW-0378">Hydrolase</keyword>
<keyword id="KW-1185">Reference proteome</keyword>
<feature type="chain" id="PRO_0000265039" description="Putative 3-methyladenine DNA glycosylase">
    <location>
        <begin position="1"/>
        <end position="208"/>
    </location>
</feature>
<evidence type="ECO:0000255" key="1">
    <source>
        <dbReference type="HAMAP-Rule" id="MF_00527"/>
    </source>
</evidence>
<name>3MGH_NITWN</name>
<dbReference type="EC" id="3.2.2.-" evidence="1"/>
<dbReference type="EMBL" id="CP000115">
    <property type="protein sequence ID" value="ABA04699.1"/>
    <property type="molecule type" value="Genomic_DNA"/>
</dbReference>
<dbReference type="RefSeq" id="WP_011314707.1">
    <property type="nucleotide sequence ID" value="NC_007406.1"/>
</dbReference>
<dbReference type="SMR" id="Q3SSP2"/>
<dbReference type="STRING" id="323098.Nwi_1438"/>
<dbReference type="KEGG" id="nwi:Nwi_1438"/>
<dbReference type="eggNOG" id="COG2094">
    <property type="taxonomic scope" value="Bacteria"/>
</dbReference>
<dbReference type="HOGENOM" id="CLU_060471_4_1_5"/>
<dbReference type="OrthoDB" id="9794313at2"/>
<dbReference type="Proteomes" id="UP000002531">
    <property type="component" value="Chromosome"/>
</dbReference>
<dbReference type="GO" id="GO:0003905">
    <property type="term" value="F:alkylbase DNA N-glycosylase activity"/>
    <property type="evidence" value="ECO:0007669"/>
    <property type="project" value="InterPro"/>
</dbReference>
<dbReference type="GO" id="GO:0003677">
    <property type="term" value="F:DNA binding"/>
    <property type="evidence" value="ECO:0007669"/>
    <property type="project" value="InterPro"/>
</dbReference>
<dbReference type="GO" id="GO:0006284">
    <property type="term" value="P:base-excision repair"/>
    <property type="evidence" value="ECO:0007669"/>
    <property type="project" value="InterPro"/>
</dbReference>
<dbReference type="CDD" id="cd00540">
    <property type="entry name" value="AAG"/>
    <property type="match status" value="1"/>
</dbReference>
<dbReference type="FunFam" id="3.10.300.10:FF:000001">
    <property type="entry name" value="Putative 3-methyladenine DNA glycosylase"/>
    <property type="match status" value="1"/>
</dbReference>
<dbReference type="Gene3D" id="3.10.300.10">
    <property type="entry name" value="Methylpurine-DNA glycosylase (MPG)"/>
    <property type="match status" value="1"/>
</dbReference>
<dbReference type="HAMAP" id="MF_00527">
    <property type="entry name" value="3MGH"/>
    <property type="match status" value="1"/>
</dbReference>
<dbReference type="InterPro" id="IPR011034">
    <property type="entry name" value="Formyl_transferase-like_C_sf"/>
</dbReference>
<dbReference type="InterPro" id="IPR003180">
    <property type="entry name" value="MPG"/>
</dbReference>
<dbReference type="InterPro" id="IPR036995">
    <property type="entry name" value="MPG_sf"/>
</dbReference>
<dbReference type="NCBIfam" id="TIGR00567">
    <property type="entry name" value="3mg"/>
    <property type="match status" value="1"/>
</dbReference>
<dbReference type="NCBIfam" id="NF002003">
    <property type="entry name" value="PRK00802.1-3"/>
    <property type="match status" value="1"/>
</dbReference>
<dbReference type="PANTHER" id="PTHR10429">
    <property type="entry name" value="DNA-3-METHYLADENINE GLYCOSYLASE"/>
    <property type="match status" value="1"/>
</dbReference>
<dbReference type="PANTHER" id="PTHR10429:SF0">
    <property type="entry name" value="DNA-3-METHYLADENINE GLYCOSYLASE"/>
    <property type="match status" value="1"/>
</dbReference>
<dbReference type="Pfam" id="PF02245">
    <property type="entry name" value="Pur_DNA_glyco"/>
    <property type="match status" value="1"/>
</dbReference>
<dbReference type="SUPFAM" id="SSF50486">
    <property type="entry name" value="FMT C-terminal domain-like"/>
    <property type="match status" value="1"/>
</dbReference>
<comment type="similarity">
    <text evidence="1">Belongs to the DNA glycosylase MPG family.</text>
</comment>
<protein>
    <recommendedName>
        <fullName evidence="1">Putative 3-methyladenine DNA glycosylase</fullName>
        <ecNumber evidence="1">3.2.2.-</ecNumber>
    </recommendedName>
</protein>
<reference key="1">
    <citation type="journal article" date="2006" name="Appl. Environ. Microbiol.">
        <title>Genome sequence of the chemolithoautotrophic nitrite-oxidizing bacterium Nitrobacter winogradskyi Nb-255.</title>
        <authorList>
            <person name="Starkenburg S.R."/>
            <person name="Chain P.S.G."/>
            <person name="Sayavedra-Soto L.A."/>
            <person name="Hauser L."/>
            <person name="Land M.L."/>
            <person name="Larimer F.W."/>
            <person name="Malfatti S.A."/>
            <person name="Klotz M.G."/>
            <person name="Bottomley P.J."/>
            <person name="Arp D.J."/>
            <person name="Hickey W.J."/>
        </authorList>
    </citation>
    <scope>NUCLEOTIDE SEQUENCE [LARGE SCALE GENOMIC DNA]</scope>
    <source>
        <strain>ATCC 25391 / DSM 10237 / CIP 104748 / NCIMB 11846 / Nb-255</strain>
    </source>
</reference>
<gene>
    <name type="ordered locus">Nwi_1438</name>
</gene>
<accession>Q3SSP2</accession>
<organism>
    <name type="scientific">Nitrobacter winogradskyi (strain ATCC 25391 / DSM 10237 / CIP 104748 / NCIMB 11846 / Nb-255)</name>
    <dbReference type="NCBI Taxonomy" id="323098"/>
    <lineage>
        <taxon>Bacteria</taxon>
        <taxon>Pseudomonadati</taxon>
        <taxon>Pseudomonadota</taxon>
        <taxon>Alphaproteobacteria</taxon>
        <taxon>Hyphomicrobiales</taxon>
        <taxon>Nitrobacteraceae</taxon>
        <taxon>Nitrobacter</taxon>
    </lineage>
</organism>